<name>CJ053_XENTR</name>
<sequence>MPEKALVTLRFGPYSSSSGLVDHRVSRLQGLRAVLVSDGHQVILEEILDRNTVELIVNGELVFRCNIKELDFGGDGQLDPLCEEARKAVKDAY</sequence>
<proteinExistence type="inferred from homology"/>
<evidence type="ECO:0000305" key="1"/>
<dbReference type="EMBL" id="CN099450">
    <property type="status" value="NOT_ANNOTATED_CDS"/>
    <property type="molecule type" value="mRNA"/>
</dbReference>
<dbReference type="FunCoup" id="P0C921">
    <property type="interactions" value="4"/>
</dbReference>
<dbReference type="PaxDb" id="8364-ENSXETP00000061092"/>
<dbReference type="eggNOG" id="ENOG502S4W1">
    <property type="taxonomic scope" value="Eukaryota"/>
</dbReference>
<dbReference type="InParanoid" id="P0C921"/>
<dbReference type="Proteomes" id="UP000008143">
    <property type="component" value="Unplaced"/>
</dbReference>
<dbReference type="InterPro" id="IPR027885">
    <property type="entry name" value="UPF0728"/>
</dbReference>
<dbReference type="PANTHER" id="PTHR28448">
    <property type="entry name" value="UPF0728 PROTEIN C10ORF53"/>
    <property type="match status" value="1"/>
</dbReference>
<dbReference type="PANTHER" id="PTHR28448:SF1">
    <property type="entry name" value="UPF0728 PROTEIN C10ORF53"/>
    <property type="match status" value="1"/>
</dbReference>
<dbReference type="Pfam" id="PF15092">
    <property type="entry name" value="UPF0728"/>
    <property type="match status" value="1"/>
</dbReference>
<accession>P0C921</accession>
<protein>
    <recommendedName>
        <fullName>UPF0728 protein C10orf53 homolog</fullName>
    </recommendedName>
</protein>
<reference key="1">
    <citation type="journal article" date="2007" name="BMC Genomics">
        <title>Exploring nervous system transcriptomes during embryogenesis and metamorphosis in Xenopus tropicalis using EST analysis.</title>
        <authorList>
            <person name="Fierro A.C."/>
            <person name="Thuret R."/>
            <person name="Coen L."/>
            <person name="Perron M."/>
            <person name="Demeneix B."/>
            <person name="Wegnez M."/>
            <person name="Gyapay G."/>
            <person name="Weissenbach J."/>
            <person name="Wincker P."/>
            <person name="Mazabraud A."/>
            <person name="Pollet N."/>
        </authorList>
    </citation>
    <scope>NUCLEOTIDE SEQUENCE [LARGE SCALE MRNA]</scope>
</reference>
<keyword id="KW-1185">Reference proteome</keyword>
<organism>
    <name type="scientific">Xenopus tropicalis</name>
    <name type="common">Western clawed frog</name>
    <name type="synonym">Silurana tropicalis</name>
    <dbReference type="NCBI Taxonomy" id="8364"/>
    <lineage>
        <taxon>Eukaryota</taxon>
        <taxon>Metazoa</taxon>
        <taxon>Chordata</taxon>
        <taxon>Craniata</taxon>
        <taxon>Vertebrata</taxon>
        <taxon>Euteleostomi</taxon>
        <taxon>Amphibia</taxon>
        <taxon>Batrachia</taxon>
        <taxon>Anura</taxon>
        <taxon>Pipoidea</taxon>
        <taxon>Pipidae</taxon>
        <taxon>Xenopodinae</taxon>
        <taxon>Xenopus</taxon>
        <taxon>Silurana</taxon>
    </lineage>
</organism>
<feature type="chain" id="PRO_0000369438" description="UPF0728 protein C10orf53 homolog">
    <location>
        <begin position="1"/>
        <end position="93"/>
    </location>
</feature>
<comment type="similarity">
    <text evidence="1">Belongs to the UPF0728 family.</text>
</comment>